<name>ULAR_ECO55</name>
<dbReference type="EMBL" id="CU928145">
    <property type="protein sequence ID" value="CAV01681.1"/>
    <property type="molecule type" value="Genomic_DNA"/>
</dbReference>
<dbReference type="RefSeq" id="WP_000133631.1">
    <property type="nucleotide sequence ID" value="NZ_CP028304.1"/>
</dbReference>
<dbReference type="SMR" id="B7LC45"/>
<dbReference type="GeneID" id="75202425"/>
<dbReference type="KEGG" id="eck:EC55989_4748"/>
<dbReference type="HOGENOM" id="CLU_060699_3_2_6"/>
<dbReference type="Proteomes" id="UP000000746">
    <property type="component" value="Chromosome"/>
</dbReference>
<dbReference type="GO" id="GO:0005737">
    <property type="term" value="C:cytoplasm"/>
    <property type="evidence" value="ECO:0007669"/>
    <property type="project" value="UniProtKB-SubCell"/>
</dbReference>
<dbReference type="GO" id="GO:0003677">
    <property type="term" value="F:DNA binding"/>
    <property type="evidence" value="ECO:0007669"/>
    <property type="project" value="UniProtKB-KW"/>
</dbReference>
<dbReference type="GO" id="GO:0003700">
    <property type="term" value="F:DNA-binding transcription factor activity"/>
    <property type="evidence" value="ECO:0007669"/>
    <property type="project" value="InterPro"/>
</dbReference>
<dbReference type="GO" id="GO:0045892">
    <property type="term" value="P:negative regulation of DNA-templated transcription"/>
    <property type="evidence" value="ECO:0007669"/>
    <property type="project" value="UniProtKB-UniRule"/>
</dbReference>
<dbReference type="FunFam" id="1.10.10.10:FF:000160">
    <property type="entry name" value="HTH-type transcriptional regulator UlaR"/>
    <property type="match status" value="1"/>
</dbReference>
<dbReference type="Gene3D" id="1.10.10.10">
    <property type="entry name" value="Winged helix-like DNA-binding domain superfamily/Winged helix DNA-binding domain"/>
    <property type="match status" value="1"/>
</dbReference>
<dbReference type="HAMAP" id="MF_01563">
    <property type="entry name" value="HTH_type_UlaR"/>
    <property type="match status" value="1"/>
</dbReference>
<dbReference type="InterPro" id="IPR050313">
    <property type="entry name" value="Carb_Metab_HTH_regulators"/>
</dbReference>
<dbReference type="InterPro" id="IPR014036">
    <property type="entry name" value="DeoR-like_C"/>
</dbReference>
<dbReference type="InterPro" id="IPR001034">
    <property type="entry name" value="DeoR_HTH"/>
</dbReference>
<dbReference type="InterPro" id="IPR037171">
    <property type="entry name" value="NagB/RpiA_transferase-like"/>
</dbReference>
<dbReference type="InterPro" id="IPR018356">
    <property type="entry name" value="Tscrpt_reg_HTH_DeoR_CS"/>
</dbReference>
<dbReference type="InterPro" id="IPR023711">
    <property type="entry name" value="Tscrpt_reg_HTH_UlaR"/>
</dbReference>
<dbReference type="InterPro" id="IPR036388">
    <property type="entry name" value="WH-like_DNA-bd_sf"/>
</dbReference>
<dbReference type="InterPro" id="IPR036390">
    <property type="entry name" value="WH_DNA-bd_sf"/>
</dbReference>
<dbReference type="NCBIfam" id="NF010034">
    <property type="entry name" value="PRK13509.1"/>
    <property type="match status" value="1"/>
</dbReference>
<dbReference type="PANTHER" id="PTHR30363">
    <property type="entry name" value="HTH-TYPE TRANSCRIPTIONAL REGULATOR SRLR-RELATED"/>
    <property type="match status" value="1"/>
</dbReference>
<dbReference type="PANTHER" id="PTHR30363:SF55">
    <property type="entry name" value="HTH-TYPE TRANSCRIPTIONAL REGULATOR ULAR"/>
    <property type="match status" value="1"/>
</dbReference>
<dbReference type="Pfam" id="PF00455">
    <property type="entry name" value="DeoRC"/>
    <property type="match status" value="1"/>
</dbReference>
<dbReference type="Pfam" id="PF08220">
    <property type="entry name" value="HTH_DeoR"/>
    <property type="match status" value="1"/>
</dbReference>
<dbReference type="PRINTS" id="PR00037">
    <property type="entry name" value="HTHLACR"/>
</dbReference>
<dbReference type="SMART" id="SM01134">
    <property type="entry name" value="DeoRC"/>
    <property type="match status" value="1"/>
</dbReference>
<dbReference type="SMART" id="SM00420">
    <property type="entry name" value="HTH_DEOR"/>
    <property type="match status" value="1"/>
</dbReference>
<dbReference type="SUPFAM" id="SSF100950">
    <property type="entry name" value="NagB/RpiA/CoA transferase-like"/>
    <property type="match status" value="1"/>
</dbReference>
<dbReference type="SUPFAM" id="SSF46785">
    <property type="entry name" value="Winged helix' DNA-binding domain"/>
    <property type="match status" value="1"/>
</dbReference>
<dbReference type="PROSITE" id="PS00894">
    <property type="entry name" value="HTH_DEOR_1"/>
    <property type="match status" value="1"/>
</dbReference>
<dbReference type="PROSITE" id="PS51000">
    <property type="entry name" value="HTH_DEOR_2"/>
    <property type="match status" value="1"/>
</dbReference>
<keyword id="KW-0963">Cytoplasm</keyword>
<keyword id="KW-0238">DNA-binding</keyword>
<keyword id="KW-1185">Reference proteome</keyword>
<keyword id="KW-0678">Repressor</keyword>
<keyword id="KW-0804">Transcription</keyword>
<keyword id="KW-0805">Transcription regulation</keyword>
<organism>
    <name type="scientific">Escherichia coli (strain 55989 / EAEC)</name>
    <dbReference type="NCBI Taxonomy" id="585055"/>
    <lineage>
        <taxon>Bacteria</taxon>
        <taxon>Pseudomonadati</taxon>
        <taxon>Pseudomonadota</taxon>
        <taxon>Gammaproteobacteria</taxon>
        <taxon>Enterobacterales</taxon>
        <taxon>Enterobacteriaceae</taxon>
        <taxon>Escherichia</taxon>
    </lineage>
</organism>
<accession>B7LC45</accession>
<protein>
    <recommendedName>
        <fullName evidence="1">HTH-type transcriptional regulator UlaR</fullName>
    </recommendedName>
</protein>
<evidence type="ECO:0000255" key="1">
    <source>
        <dbReference type="HAMAP-Rule" id="MF_01563"/>
    </source>
</evidence>
<feature type="chain" id="PRO_1000185443" description="HTH-type transcriptional regulator UlaR">
    <location>
        <begin position="1"/>
        <end position="251"/>
    </location>
</feature>
<feature type="domain" description="HTH deoR-type" evidence="1">
    <location>
        <begin position="3"/>
        <end position="58"/>
    </location>
</feature>
<feature type="DNA-binding region" description="H-T-H motif" evidence="1">
    <location>
        <begin position="20"/>
        <end position="39"/>
    </location>
</feature>
<proteinExistence type="inferred from homology"/>
<comment type="function">
    <text evidence="1">Represses ulaG and the ulaABCDEF operon.</text>
</comment>
<comment type="subcellular location">
    <subcellularLocation>
        <location evidence="1">Cytoplasm</location>
    </subcellularLocation>
</comment>
<gene>
    <name evidence="1" type="primary">ulaR</name>
    <name type="ordered locus">EC55989_4748</name>
</gene>
<sequence length="251" mass="27602">MTEAQRHQILLEMLAQLGFVTVEKVVERLGISPATARRDINKLDESGKLKKVRNGAEAITQQRPRWTPMNLHQAQNHDEKVRIAKAASQLVNPGESVVINCGSTAFLLGREMCGKPVQIITNYLPLANYLIDQEHDSVIIMGGQYNKSQSITLSPQGSENSLYAGHWMFTSGKGLTAEGLYKTDMLTAMAEQKMLSVVGKLVVLVDSSKIGERAGMLFSRADQIDMLITGKNANPEILQQLEAQGVSILRV</sequence>
<reference key="1">
    <citation type="journal article" date="2009" name="PLoS Genet.">
        <title>Organised genome dynamics in the Escherichia coli species results in highly diverse adaptive paths.</title>
        <authorList>
            <person name="Touchon M."/>
            <person name="Hoede C."/>
            <person name="Tenaillon O."/>
            <person name="Barbe V."/>
            <person name="Baeriswyl S."/>
            <person name="Bidet P."/>
            <person name="Bingen E."/>
            <person name="Bonacorsi S."/>
            <person name="Bouchier C."/>
            <person name="Bouvet O."/>
            <person name="Calteau A."/>
            <person name="Chiapello H."/>
            <person name="Clermont O."/>
            <person name="Cruveiller S."/>
            <person name="Danchin A."/>
            <person name="Diard M."/>
            <person name="Dossat C."/>
            <person name="Karoui M.E."/>
            <person name="Frapy E."/>
            <person name="Garry L."/>
            <person name="Ghigo J.M."/>
            <person name="Gilles A.M."/>
            <person name="Johnson J."/>
            <person name="Le Bouguenec C."/>
            <person name="Lescat M."/>
            <person name="Mangenot S."/>
            <person name="Martinez-Jehanne V."/>
            <person name="Matic I."/>
            <person name="Nassif X."/>
            <person name="Oztas S."/>
            <person name="Petit M.A."/>
            <person name="Pichon C."/>
            <person name="Rouy Z."/>
            <person name="Ruf C.S."/>
            <person name="Schneider D."/>
            <person name="Tourret J."/>
            <person name="Vacherie B."/>
            <person name="Vallenet D."/>
            <person name="Medigue C."/>
            <person name="Rocha E.P.C."/>
            <person name="Denamur E."/>
        </authorList>
    </citation>
    <scope>NUCLEOTIDE SEQUENCE [LARGE SCALE GENOMIC DNA]</scope>
    <source>
        <strain>55989 / EAEC</strain>
    </source>
</reference>